<proteinExistence type="inferred from homology"/>
<name>SYP_STRGG</name>
<feature type="chain" id="PRO_1000199430" description="Proline--tRNA ligase">
    <location>
        <begin position="1"/>
        <end position="567"/>
    </location>
</feature>
<protein>
    <recommendedName>
        <fullName evidence="1">Proline--tRNA ligase</fullName>
        <ecNumber evidence="1">6.1.1.15</ecNumber>
    </recommendedName>
    <alternativeName>
        <fullName evidence="1">Prolyl-tRNA synthetase</fullName>
        <shortName evidence="1">ProRS</shortName>
    </alternativeName>
</protein>
<reference key="1">
    <citation type="journal article" date="2008" name="J. Bacteriol.">
        <title>Genome sequence of the streptomycin-producing microorganism Streptomyces griseus IFO 13350.</title>
        <authorList>
            <person name="Ohnishi Y."/>
            <person name="Ishikawa J."/>
            <person name="Hara H."/>
            <person name="Suzuki H."/>
            <person name="Ikenoya M."/>
            <person name="Ikeda H."/>
            <person name="Yamashita A."/>
            <person name="Hattori M."/>
            <person name="Horinouchi S."/>
        </authorList>
    </citation>
    <scope>NUCLEOTIDE SEQUENCE [LARGE SCALE GENOMIC DNA]</scope>
    <source>
        <strain>JCM 4626 / CBS 651.72 / NBRC 13350 / KCC S-0626 / ISP 5235</strain>
    </source>
</reference>
<dbReference type="EC" id="6.1.1.15" evidence="1"/>
<dbReference type="EMBL" id="AP009493">
    <property type="protein sequence ID" value="BAG18647.1"/>
    <property type="molecule type" value="Genomic_DNA"/>
</dbReference>
<dbReference type="RefSeq" id="WP_012378797.1">
    <property type="nucleotide sequence ID" value="NC_010572.1"/>
</dbReference>
<dbReference type="SMR" id="B1VYP2"/>
<dbReference type="KEGG" id="sgr:SGR_1818"/>
<dbReference type="PATRIC" id="fig|455632.4.peg.1850"/>
<dbReference type="eggNOG" id="COG0442">
    <property type="taxonomic scope" value="Bacteria"/>
</dbReference>
<dbReference type="HOGENOM" id="CLU_016739_0_0_11"/>
<dbReference type="Proteomes" id="UP000001685">
    <property type="component" value="Chromosome"/>
</dbReference>
<dbReference type="GO" id="GO:0005829">
    <property type="term" value="C:cytosol"/>
    <property type="evidence" value="ECO:0007669"/>
    <property type="project" value="TreeGrafter"/>
</dbReference>
<dbReference type="GO" id="GO:0002161">
    <property type="term" value="F:aminoacyl-tRNA deacylase activity"/>
    <property type="evidence" value="ECO:0007669"/>
    <property type="project" value="InterPro"/>
</dbReference>
<dbReference type="GO" id="GO:0005524">
    <property type="term" value="F:ATP binding"/>
    <property type="evidence" value="ECO:0007669"/>
    <property type="project" value="UniProtKB-UniRule"/>
</dbReference>
<dbReference type="GO" id="GO:0004827">
    <property type="term" value="F:proline-tRNA ligase activity"/>
    <property type="evidence" value="ECO:0007669"/>
    <property type="project" value="UniProtKB-UniRule"/>
</dbReference>
<dbReference type="GO" id="GO:0006433">
    <property type="term" value="P:prolyl-tRNA aminoacylation"/>
    <property type="evidence" value="ECO:0007669"/>
    <property type="project" value="UniProtKB-UniRule"/>
</dbReference>
<dbReference type="CDD" id="cd04334">
    <property type="entry name" value="ProRS-INS"/>
    <property type="match status" value="1"/>
</dbReference>
<dbReference type="CDD" id="cd00861">
    <property type="entry name" value="ProRS_anticodon_short"/>
    <property type="match status" value="1"/>
</dbReference>
<dbReference type="CDD" id="cd00779">
    <property type="entry name" value="ProRS_core_prok"/>
    <property type="match status" value="1"/>
</dbReference>
<dbReference type="FunFam" id="3.30.930.10:FF:000065">
    <property type="entry name" value="Proline--tRNA ligase"/>
    <property type="match status" value="1"/>
</dbReference>
<dbReference type="FunFam" id="3.30.930.10:FF:000066">
    <property type="entry name" value="Proline--tRNA ligase"/>
    <property type="match status" value="1"/>
</dbReference>
<dbReference type="Gene3D" id="3.40.50.800">
    <property type="entry name" value="Anticodon-binding domain"/>
    <property type="match status" value="1"/>
</dbReference>
<dbReference type="Gene3D" id="3.30.930.10">
    <property type="entry name" value="Bira Bifunctional Protein, Domain 2"/>
    <property type="match status" value="2"/>
</dbReference>
<dbReference type="Gene3D" id="3.90.960.10">
    <property type="entry name" value="YbaK/aminoacyl-tRNA synthetase-associated domain"/>
    <property type="match status" value="1"/>
</dbReference>
<dbReference type="HAMAP" id="MF_01569">
    <property type="entry name" value="Pro_tRNA_synth_type1"/>
    <property type="match status" value="1"/>
</dbReference>
<dbReference type="InterPro" id="IPR002314">
    <property type="entry name" value="aa-tRNA-synt_IIb"/>
</dbReference>
<dbReference type="InterPro" id="IPR006195">
    <property type="entry name" value="aa-tRNA-synth_II"/>
</dbReference>
<dbReference type="InterPro" id="IPR045864">
    <property type="entry name" value="aa-tRNA-synth_II/BPL/LPL"/>
</dbReference>
<dbReference type="InterPro" id="IPR004154">
    <property type="entry name" value="Anticodon-bd"/>
</dbReference>
<dbReference type="InterPro" id="IPR036621">
    <property type="entry name" value="Anticodon-bd_dom_sf"/>
</dbReference>
<dbReference type="InterPro" id="IPR002316">
    <property type="entry name" value="Pro-tRNA-ligase_IIa"/>
</dbReference>
<dbReference type="InterPro" id="IPR004500">
    <property type="entry name" value="Pro-tRNA-synth_IIa_bac-type"/>
</dbReference>
<dbReference type="InterPro" id="IPR023717">
    <property type="entry name" value="Pro-tRNA-Synthase_IIa_type1"/>
</dbReference>
<dbReference type="InterPro" id="IPR050062">
    <property type="entry name" value="Pro-tRNA_synthetase"/>
</dbReference>
<dbReference type="InterPro" id="IPR044140">
    <property type="entry name" value="ProRS_anticodon_short"/>
</dbReference>
<dbReference type="InterPro" id="IPR033730">
    <property type="entry name" value="ProRS_core_prok"/>
</dbReference>
<dbReference type="InterPro" id="IPR036754">
    <property type="entry name" value="YbaK/aa-tRNA-synt-asso_dom_sf"/>
</dbReference>
<dbReference type="InterPro" id="IPR007214">
    <property type="entry name" value="YbaK/aa-tRNA-synth-assoc-dom"/>
</dbReference>
<dbReference type="NCBIfam" id="NF006625">
    <property type="entry name" value="PRK09194.1"/>
    <property type="match status" value="1"/>
</dbReference>
<dbReference type="NCBIfam" id="TIGR00409">
    <property type="entry name" value="proS_fam_II"/>
    <property type="match status" value="1"/>
</dbReference>
<dbReference type="PANTHER" id="PTHR42753">
    <property type="entry name" value="MITOCHONDRIAL RIBOSOME PROTEIN L39/PROLYL-TRNA LIGASE FAMILY MEMBER"/>
    <property type="match status" value="1"/>
</dbReference>
<dbReference type="PANTHER" id="PTHR42753:SF2">
    <property type="entry name" value="PROLINE--TRNA LIGASE"/>
    <property type="match status" value="1"/>
</dbReference>
<dbReference type="Pfam" id="PF03129">
    <property type="entry name" value="HGTP_anticodon"/>
    <property type="match status" value="1"/>
</dbReference>
<dbReference type="Pfam" id="PF00587">
    <property type="entry name" value="tRNA-synt_2b"/>
    <property type="match status" value="1"/>
</dbReference>
<dbReference type="Pfam" id="PF04073">
    <property type="entry name" value="tRNA_edit"/>
    <property type="match status" value="1"/>
</dbReference>
<dbReference type="PRINTS" id="PR01046">
    <property type="entry name" value="TRNASYNTHPRO"/>
</dbReference>
<dbReference type="SUPFAM" id="SSF52954">
    <property type="entry name" value="Class II aaRS ABD-related"/>
    <property type="match status" value="1"/>
</dbReference>
<dbReference type="SUPFAM" id="SSF55681">
    <property type="entry name" value="Class II aaRS and biotin synthetases"/>
    <property type="match status" value="1"/>
</dbReference>
<dbReference type="SUPFAM" id="SSF55826">
    <property type="entry name" value="YbaK/ProRS associated domain"/>
    <property type="match status" value="1"/>
</dbReference>
<dbReference type="PROSITE" id="PS50862">
    <property type="entry name" value="AA_TRNA_LIGASE_II"/>
    <property type="match status" value="1"/>
</dbReference>
<sequence>MAQVQRMSRLMVKTLRDDPADAETLSHKLLVRAGYVRRNAAGIWSWLPLGKKVLDNISNVVREEMDAIGAQEVLLPALLPKEPYEASGRWEEYGDLLFRLKDRKGGDYLLGPTHEEIFTQTVKDQCTSYKDLPVMLYQIQTKYRDEARPRSGVLRGREFQMKDSYSFDTTDEGLAHSYALHRAAYIKIFERLGLDHRIVSAVSGAMGGSASEEFLAPAAAGEDTFADCPNCDYAANTEAVTFALAPVDGSAHGAVEELDTPDTPTIETLAAHLGVPASATLKNLLVKVDGEIVAVGVPGHREVDLGKLGEHLAPAVVELVTAEDFVGRDDLVRGYVGPQGLEKVRYLADPRVAPGTSWITGANKEGKHARNVVAGRDFEVDEYLDVVVVEEGDPCPKCGTGLVLDRAIEIGHIFQLGRKYADTFQLDVLGQQGKPVRVTMGSYGIGVSRAVAALTEQTADDKGLCWPREIAPADVHVVAAGKALQTELALDVSEKLNAAGLRVLVDDRPGVSPGVKFTDSELIGVPKILVAGRRSADGVLELKDRRTGEREELTVDEAIARLTADLA</sequence>
<accession>B1VYP2</accession>
<keyword id="KW-0030">Aminoacyl-tRNA synthetase</keyword>
<keyword id="KW-0067">ATP-binding</keyword>
<keyword id="KW-0963">Cytoplasm</keyword>
<keyword id="KW-0436">Ligase</keyword>
<keyword id="KW-0547">Nucleotide-binding</keyword>
<keyword id="KW-0648">Protein biosynthesis</keyword>
<organism>
    <name type="scientific">Streptomyces griseus subsp. griseus (strain JCM 4626 / CBS 651.72 / NBRC 13350 / KCC S-0626 / ISP 5235)</name>
    <dbReference type="NCBI Taxonomy" id="455632"/>
    <lineage>
        <taxon>Bacteria</taxon>
        <taxon>Bacillati</taxon>
        <taxon>Actinomycetota</taxon>
        <taxon>Actinomycetes</taxon>
        <taxon>Kitasatosporales</taxon>
        <taxon>Streptomycetaceae</taxon>
        <taxon>Streptomyces</taxon>
    </lineage>
</organism>
<evidence type="ECO:0000255" key="1">
    <source>
        <dbReference type="HAMAP-Rule" id="MF_01569"/>
    </source>
</evidence>
<gene>
    <name evidence="1" type="primary">proS</name>
    <name type="ordered locus">SGR_1818</name>
</gene>
<comment type="function">
    <text evidence="1">Catalyzes the attachment of proline to tRNA(Pro) in a two-step reaction: proline is first activated by ATP to form Pro-AMP and then transferred to the acceptor end of tRNA(Pro). As ProRS can inadvertently accommodate and process non-cognate amino acids such as alanine and cysteine, to avoid such errors it has two additional distinct editing activities against alanine. One activity is designated as 'pretransfer' editing and involves the tRNA(Pro)-independent hydrolysis of activated Ala-AMP. The other activity is designated 'posttransfer' editing and involves deacylation of mischarged Ala-tRNA(Pro). The misacylated Cys-tRNA(Pro) is not edited by ProRS.</text>
</comment>
<comment type="catalytic activity">
    <reaction evidence="1">
        <text>tRNA(Pro) + L-proline + ATP = L-prolyl-tRNA(Pro) + AMP + diphosphate</text>
        <dbReference type="Rhea" id="RHEA:14305"/>
        <dbReference type="Rhea" id="RHEA-COMP:9700"/>
        <dbReference type="Rhea" id="RHEA-COMP:9702"/>
        <dbReference type="ChEBI" id="CHEBI:30616"/>
        <dbReference type="ChEBI" id="CHEBI:33019"/>
        <dbReference type="ChEBI" id="CHEBI:60039"/>
        <dbReference type="ChEBI" id="CHEBI:78442"/>
        <dbReference type="ChEBI" id="CHEBI:78532"/>
        <dbReference type="ChEBI" id="CHEBI:456215"/>
        <dbReference type="EC" id="6.1.1.15"/>
    </reaction>
</comment>
<comment type="subunit">
    <text evidence="1">Homodimer.</text>
</comment>
<comment type="subcellular location">
    <subcellularLocation>
        <location evidence="1">Cytoplasm</location>
    </subcellularLocation>
</comment>
<comment type="domain">
    <text evidence="1">Consists of three domains: the N-terminal catalytic domain, the editing domain and the C-terminal anticodon-binding domain.</text>
</comment>
<comment type="similarity">
    <text evidence="1">Belongs to the class-II aminoacyl-tRNA synthetase family. ProS type 1 subfamily.</text>
</comment>